<accession>Q99PG0</accession>
<accession>Q8VCF2</accession>
<gene>
    <name type="primary">Aadac</name>
    <name type="synonym">Aada</name>
</gene>
<reference key="1">
    <citation type="journal article" date="2001" name="J. Biol. Chem.">
        <title>Characterization of the rodent genes for arylacetamide deacetylase, a putative microsomal lipase, and evidence for transcriptional regulation.</title>
        <authorList>
            <person name="Trickett J.I."/>
            <person name="Patel D.D."/>
            <person name="Knight B.L."/>
            <person name="Saggerson E.D."/>
            <person name="Gibbons G.F."/>
            <person name="Pease R.J."/>
        </authorList>
    </citation>
    <scope>NUCLEOTIDE SEQUENCE [GENOMIC DNA]</scope>
    <source>
        <strain>129/SvEvTacfBr</strain>
        <tissue>Spleen</tissue>
    </source>
</reference>
<reference key="2">
    <citation type="journal article" date="2004" name="Genome Res.">
        <title>The status, quality, and expansion of the NIH full-length cDNA project: the Mammalian Gene Collection (MGC).</title>
        <authorList>
            <consortium name="The MGC Project Team"/>
        </authorList>
    </citation>
    <scope>NUCLEOTIDE SEQUENCE [LARGE SCALE MRNA]</scope>
    <source>
        <strain>FVB/N</strain>
        <tissue>Liver</tissue>
    </source>
</reference>
<reference key="3">
    <citation type="journal article" date="2010" name="Cell">
        <title>A tissue-specific atlas of mouse protein phosphorylation and expression.</title>
        <authorList>
            <person name="Huttlin E.L."/>
            <person name="Jedrychowski M.P."/>
            <person name="Elias J.E."/>
            <person name="Goswami T."/>
            <person name="Rad R."/>
            <person name="Beausoleil S.A."/>
            <person name="Villen J."/>
            <person name="Haas W."/>
            <person name="Sowa M.E."/>
            <person name="Gygi S.P."/>
        </authorList>
    </citation>
    <scope>IDENTIFICATION BY MASS SPECTROMETRY [LARGE SCALE ANALYSIS]</scope>
    <source>
        <tissue>Kidney</tissue>
        <tissue>Liver</tissue>
    </source>
</reference>
<reference key="4">
    <citation type="journal article" date="2010" name="J. Lipid Res.">
        <title>Arylacetamide deacetylase attenuates fatty-acid-induced triacylglycerol accumulation in rat hepatoma cells.</title>
        <authorList>
            <person name="Lo V."/>
            <person name="Erickson B."/>
            <person name="Thomason-Hughes M."/>
            <person name="Ko K.W."/>
            <person name="Dolinsky V.W."/>
            <person name="Nelson R."/>
            <person name="Lehner R."/>
        </authorList>
    </citation>
    <scope>FUNCTION</scope>
    <scope>CATALYTIC ACTIVITY</scope>
    <scope>TISSUE SPECIFICITY</scope>
    <scope>SUBCELLULAR LOCATION</scope>
    <scope>GLYCOSYLATION</scope>
</reference>
<reference key="5">
    <citation type="journal article" date="2012" name="Drug Metab. Dispos.">
        <title>Species differences in tissue distribution and enzyme activities of arylacetamide deacetylase in human, rat, and mouse.</title>
        <authorList>
            <person name="Kobayashi Y."/>
            <person name="Fukami T."/>
            <person name="Nakajima A."/>
            <person name="Watanabe A."/>
            <person name="Nakajima M."/>
            <person name="Yokoi T."/>
        </authorList>
    </citation>
    <scope>FUNCTION</scope>
    <scope>TISSUE SPECIFICITY</scope>
</reference>
<feature type="chain" id="PRO_0000071543" description="Arylacetamide deacetylase">
    <location>
        <begin position="1"/>
        <end position="398"/>
    </location>
</feature>
<feature type="topological domain" description="Cytoplasmic" evidence="3">
    <location>
        <begin position="1"/>
        <end position="5"/>
    </location>
</feature>
<feature type="transmembrane region" description="Helical; Signal-anchor for type II membrane protein" evidence="3">
    <location>
        <begin position="6"/>
        <end position="26"/>
    </location>
</feature>
<feature type="topological domain" description="Lumenal" evidence="3">
    <location>
        <begin position="27"/>
        <end position="398"/>
    </location>
</feature>
<feature type="short sequence motif" description="Involved in the stabilization of the negatively charged intermediate by the formation of the oxyanion hole" evidence="2">
    <location>
        <begin position="110"/>
        <end position="112"/>
    </location>
</feature>
<feature type="active site" evidence="4">
    <location>
        <position position="188"/>
    </location>
</feature>
<feature type="active site" evidence="2">
    <location>
        <position position="342"/>
    </location>
</feature>
<feature type="active site" evidence="2">
    <location>
        <position position="372"/>
    </location>
</feature>
<feature type="glycosylation site" description="N-linked (GlcNAc...) asparagine" evidence="3">
    <location>
        <position position="281"/>
    </location>
</feature>
<feature type="disulfide bond" evidence="1">
    <location>
        <begin position="115"/>
        <end position="339"/>
    </location>
</feature>
<feature type="sequence conflict" description="In Ref. 2; AAH19999/AAH54823." evidence="7" ref="2">
    <original>A</original>
    <variation>T</variation>
    <location>
        <position position="101"/>
    </location>
</feature>
<organism>
    <name type="scientific">Mus musculus</name>
    <name type="common">Mouse</name>
    <dbReference type="NCBI Taxonomy" id="10090"/>
    <lineage>
        <taxon>Eukaryota</taxon>
        <taxon>Metazoa</taxon>
        <taxon>Chordata</taxon>
        <taxon>Craniata</taxon>
        <taxon>Vertebrata</taxon>
        <taxon>Euteleostomi</taxon>
        <taxon>Mammalia</taxon>
        <taxon>Eutheria</taxon>
        <taxon>Euarchontoglires</taxon>
        <taxon>Glires</taxon>
        <taxon>Rodentia</taxon>
        <taxon>Myomorpha</taxon>
        <taxon>Muroidea</taxon>
        <taxon>Muridae</taxon>
        <taxon>Murinae</taxon>
        <taxon>Mus</taxon>
        <taxon>Mus</taxon>
    </lineage>
</organism>
<comment type="function">
    <text evidence="1 5 6">Displays cellular triglyceride lipase activity in liver, increases the levels of intracellular fatty acids derived from the hydrolysis of newly formed triglyceride stores and plays a role in very low-density lipoprotein assembly (By similarity). Displays serine esterase activity in liver. Deacetylates a variety of arylacetamide substrates, including xenobiotic compounds and procarcinogens, converting them to the primary arylamide compounds and increasing their toxicity.</text>
</comment>
<comment type="catalytic activity">
    <reaction evidence="5">
        <text>a triacylglycerol + H2O = a diacylglycerol + a fatty acid + H(+)</text>
        <dbReference type="Rhea" id="RHEA:12044"/>
        <dbReference type="ChEBI" id="CHEBI:15377"/>
        <dbReference type="ChEBI" id="CHEBI:15378"/>
        <dbReference type="ChEBI" id="CHEBI:17855"/>
        <dbReference type="ChEBI" id="CHEBI:18035"/>
        <dbReference type="ChEBI" id="CHEBI:28868"/>
        <dbReference type="EC" id="3.1.1.3"/>
    </reaction>
</comment>
<comment type="subcellular location">
    <subcellularLocation>
        <location evidence="5">Endoplasmic reticulum membrane</location>
        <topology evidence="5">Single-pass type II membrane protein</topology>
    </subcellularLocation>
    <subcellularLocation>
        <location evidence="1">Microsome membrane</location>
        <topology evidence="1">Single-pass type II membrane protein</topology>
    </subcellularLocation>
</comment>
<comment type="tissue specificity">
    <text evidence="5 6">Highest levels in liver with lower levels in jejunum and kidney.</text>
</comment>
<comment type="PTM">
    <text evidence="5">N-glycosylated.</text>
</comment>
<comment type="similarity">
    <text evidence="7">Belongs to the 'GDXG' lipolytic enzyme family.</text>
</comment>
<protein>
    <recommendedName>
        <fullName>Arylacetamide deacetylase</fullName>
        <ecNumber>3.1.1.3</ecNumber>
    </recommendedName>
</protein>
<dbReference type="EC" id="3.1.1.3"/>
<dbReference type="EMBL" id="AF306788">
    <property type="protein sequence ID" value="AAG60035.1"/>
    <property type="molecule type" value="Genomic_DNA"/>
</dbReference>
<dbReference type="EMBL" id="BC019999">
    <property type="protein sequence ID" value="AAH19999.1"/>
    <property type="molecule type" value="mRNA"/>
</dbReference>
<dbReference type="EMBL" id="BC054823">
    <property type="protein sequence ID" value="AAH54823.1"/>
    <property type="molecule type" value="mRNA"/>
</dbReference>
<dbReference type="CCDS" id="CCDS17375.1"/>
<dbReference type="RefSeq" id="NP_075872.1">
    <property type="nucleotide sequence ID" value="NM_023383.1"/>
</dbReference>
<dbReference type="SMR" id="Q99PG0"/>
<dbReference type="FunCoup" id="Q99PG0">
    <property type="interactions" value="199"/>
</dbReference>
<dbReference type="STRING" id="10090.ENSMUSP00000029325"/>
<dbReference type="ChEMBL" id="CHEMBL3509583"/>
<dbReference type="ESTHER" id="mouse-aryla">
    <property type="family name" value="Arylacetamide_deacetylase"/>
</dbReference>
<dbReference type="MEROPS" id="S09.991"/>
<dbReference type="GlyCosmos" id="Q99PG0">
    <property type="glycosylation" value="1 site, No reported glycans"/>
</dbReference>
<dbReference type="GlyGen" id="Q99PG0">
    <property type="glycosylation" value="2 sites, 1 O-linked glycan (1 site)"/>
</dbReference>
<dbReference type="iPTMnet" id="Q99PG0"/>
<dbReference type="PhosphoSitePlus" id="Q99PG0"/>
<dbReference type="SwissPalm" id="Q99PG0"/>
<dbReference type="jPOST" id="Q99PG0"/>
<dbReference type="PaxDb" id="10090-ENSMUSP00000029325"/>
<dbReference type="PeptideAtlas" id="Q99PG0"/>
<dbReference type="ProteomicsDB" id="296430"/>
<dbReference type="Antibodypedia" id="1182">
    <property type="antibodies" value="197 antibodies from 27 providers"/>
</dbReference>
<dbReference type="DNASU" id="67758"/>
<dbReference type="Ensembl" id="ENSMUST00000029325.5">
    <property type="protein sequence ID" value="ENSMUSP00000029325.4"/>
    <property type="gene ID" value="ENSMUSG00000027761.5"/>
</dbReference>
<dbReference type="GeneID" id="67758"/>
<dbReference type="KEGG" id="mmu:67758"/>
<dbReference type="UCSC" id="uc008piz.1">
    <property type="organism name" value="mouse"/>
</dbReference>
<dbReference type="AGR" id="MGI:1915008"/>
<dbReference type="CTD" id="13"/>
<dbReference type="MGI" id="MGI:1915008">
    <property type="gene designation" value="Aadac"/>
</dbReference>
<dbReference type="VEuPathDB" id="HostDB:ENSMUSG00000027761"/>
<dbReference type="eggNOG" id="KOG1515">
    <property type="taxonomic scope" value="Eukaryota"/>
</dbReference>
<dbReference type="GeneTree" id="ENSGT00940000155975"/>
<dbReference type="HOGENOM" id="CLU_012494_12_0_1"/>
<dbReference type="InParanoid" id="Q99PG0"/>
<dbReference type="OMA" id="PKHMARW"/>
<dbReference type="OrthoDB" id="408631at2759"/>
<dbReference type="PhylomeDB" id="Q99PG0"/>
<dbReference type="TreeFam" id="TF314978"/>
<dbReference type="Reactome" id="R-MMU-211945">
    <property type="pathway name" value="Phase I - Functionalization of compounds"/>
</dbReference>
<dbReference type="SABIO-RK" id="Q99PG0"/>
<dbReference type="BioGRID-ORCS" id="67758">
    <property type="hits" value="8 hits in 79 CRISPR screens"/>
</dbReference>
<dbReference type="ChiTaRS" id="Aadac">
    <property type="organism name" value="mouse"/>
</dbReference>
<dbReference type="PRO" id="PR:Q99PG0"/>
<dbReference type="Proteomes" id="UP000000589">
    <property type="component" value="Chromosome 3"/>
</dbReference>
<dbReference type="RNAct" id="Q99PG0">
    <property type="molecule type" value="protein"/>
</dbReference>
<dbReference type="Bgee" id="ENSMUSG00000027761">
    <property type="expression patterns" value="Expressed in left lobe of liver and 114 other cell types or tissues"/>
</dbReference>
<dbReference type="GO" id="GO:0005789">
    <property type="term" value="C:endoplasmic reticulum membrane"/>
    <property type="evidence" value="ECO:0000314"/>
    <property type="project" value="UniProtKB"/>
</dbReference>
<dbReference type="GO" id="GO:0019213">
    <property type="term" value="F:deacetylase activity"/>
    <property type="evidence" value="ECO:0000250"/>
    <property type="project" value="UniProtKB"/>
</dbReference>
<dbReference type="GO" id="GO:0016298">
    <property type="term" value="F:lipase activity"/>
    <property type="evidence" value="ECO:0000304"/>
    <property type="project" value="MGI"/>
</dbReference>
<dbReference type="GO" id="GO:0017171">
    <property type="term" value="F:serine hydrolase activity"/>
    <property type="evidence" value="ECO:0000314"/>
    <property type="project" value="UniProtKB"/>
</dbReference>
<dbReference type="GO" id="GO:0004806">
    <property type="term" value="F:triacylglycerol lipase activity"/>
    <property type="evidence" value="ECO:0000314"/>
    <property type="project" value="UniProtKB"/>
</dbReference>
<dbReference type="GO" id="GO:0006629">
    <property type="term" value="P:lipid metabolic process"/>
    <property type="evidence" value="ECO:0007669"/>
    <property type="project" value="UniProtKB-KW"/>
</dbReference>
<dbReference type="GO" id="GO:0010898">
    <property type="term" value="P:positive regulation of triglyceride catabolic process"/>
    <property type="evidence" value="ECO:0000314"/>
    <property type="project" value="UniProtKB"/>
</dbReference>
<dbReference type="Gene3D" id="3.40.50.1820">
    <property type="entry name" value="alpha/beta hydrolase"/>
    <property type="match status" value="1"/>
</dbReference>
<dbReference type="InterPro" id="IPR013094">
    <property type="entry name" value="AB_hydrolase_3"/>
</dbReference>
<dbReference type="InterPro" id="IPR029058">
    <property type="entry name" value="AB_hydrolase_fold"/>
</dbReference>
<dbReference type="InterPro" id="IPR017157">
    <property type="entry name" value="Arylacetamide_deacetylase"/>
</dbReference>
<dbReference type="InterPro" id="IPR050300">
    <property type="entry name" value="GDXG_lipolytic_enzyme"/>
</dbReference>
<dbReference type="InterPro" id="IPR002168">
    <property type="entry name" value="Lipase_GDXG_HIS_AS"/>
</dbReference>
<dbReference type="InterPro" id="IPR033140">
    <property type="entry name" value="Lipase_GDXG_put_SER_AS"/>
</dbReference>
<dbReference type="PANTHER" id="PTHR48081">
    <property type="entry name" value="AB HYDROLASE SUPERFAMILY PROTEIN C4A8.06C"/>
    <property type="match status" value="1"/>
</dbReference>
<dbReference type="PANTHER" id="PTHR48081:SF28">
    <property type="entry name" value="ALPHA_BETA HYDROLASE FOLD-3 DOMAIN-CONTAINING PROTEIN"/>
    <property type="match status" value="1"/>
</dbReference>
<dbReference type="Pfam" id="PF07859">
    <property type="entry name" value="Abhydrolase_3"/>
    <property type="match status" value="2"/>
</dbReference>
<dbReference type="PIRSF" id="PIRSF037251">
    <property type="entry name" value="Arylacetamide_deacetylase"/>
    <property type="match status" value="1"/>
</dbReference>
<dbReference type="SUPFAM" id="SSF53474">
    <property type="entry name" value="alpha/beta-Hydrolases"/>
    <property type="match status" value="1"/>
</dbReference>
<dbReference type="PROSITE" id="PS01173">
    <property type="entry name" value="LIPASE_GDXG_HIS"/>
    <property type="match status" value="1"/>
</dbReference>
<dbReference type="PROSITE" id="PS01174">
    <property type="entry name" value="LIPASE_GDXG_SER"/>
    <property type="match status" value="1"/>
</dbReference>
<name>AAAD_MOUSE</name>
<evidence type="ECO:0000250" key="1"/>
<evidence type="ECO:0000250" key="2">
    <source>
        <dbReference type="UniProtKB" id="Q5NUF3"/>
    </source>
</evidence>
<evidence type="ECO:0000255" key="3"/>
<evidence type="ECO:0000255" key="4">
    <source>
        <dbReference type="PROSITE-ProRule" id="PRU10038"/>
    </source>
</evidence>
<evidence type="ECO:0000269" key="5">
    <source>
    </source>
</evidence>
<evidence type="ECO:0000269" key="6">
    <source>
    </source>
</evidence>
<evidence type="ECO:0000305" key="7"/>
<proteinExistence type="evidence at protein level"/>
<keyword id="KW-1015">Disulfide bond</keyword>
<keyword id="KW-0256">Endoplasmic reticulum</keyword>
<keyword id="KW-0325">Glycoprotein</keyword>
<keyword id="KW-0378">Hydrolase</keyword>
<keyword id="KW-0443">Lipid metabolism</keyword>
<keyword id="KW-0472">Membrane</keyword>
<keyword id="KW-0492">Microsome</keyword>
<keyword id="KW-1185">Reference proteome</keyword>
<keyword id="KW-0735">Signal-anchor</keyword>
<keyword id="KW-0812">Transmembrane</keyword>
<keyword id="KW-1133">Transmembrane helix</keyword>
<sequence length="398" mass="45250">MGKTISLLISVVLVAYYLYIPLPDAIEEPWKVVWETAFVKIGTDLASFGELLGISHFMETIQLLMSFQEVPPTSDEHVTVMETAFDSVPVRIYIPKRKSMALRRGLFYIHGGGWCLGSAAHFSYDTLSRWTAHKLDAVVVSTDYGLAPKHHFPRQFEDVYRSLRWFLQEDVLEKYGVDPRRVGVSGDSAGGNLAAAVTQQLIQDPDVKIKLKVQALIYPALQALDTNVPSQQEGSHFPVLTRSLMVRFWSEYFTTDRGLEKAMLLNQHVPMESSHLLQFVNWSSLLPERYKKSPVYKNPTPGSSELAQKYPGFIDVKACPLLANDNILHHLPKTYIITCQYDVLRDDGLMYVKRLQNVGVHVTHHHVEDGFHGTFSFPGLKLSERMKNQYLSWLIKNL</sequence>